<comment type="catalytic activity">
    <reaction>
        <text>Endohydrolysis of (1-&gt;4)-beta-D-glucosidic linkages in cellulose, lichenin and cereal beta-D-glucans.</text>
        <dbReference type="EC" id="3.2.1.4"/>
    </reaction>
</comment>
<comment type="subcellular location">
    <subcellularLocation>
        <location>Secreted</location>
    </subcellularLocation>
</comment>
<comment type="similarity">
    <text evidence="5">Belongs to the glycosyl hydrolase 5 (cellulase A) family.</text>
</comment>
<name>GUNN_PECAT</name>
<organism>
    <name type="scientific">Pectobacterium atrosepticum</name>
    <name type="common">Erwinia carotovora subsp. atroseptica</name>
    <dbReference type="NCBI Taxonomy" id="29471"/>
    <lineage>
        <taxon>Bacteria</taxon>
        <taxon>Pseudomonadati</taxon>
        <taxon>Pseudomonadota</taxon>
        <taxon>Gammaproteobacteria</taxon>
        <taxon>Enterobacterales</taxon>
        <taxon>Pectobacteriaceae</taxon>
        <taxon>Pectobacterium</taxon>
    </lineage>
</organism>
<keyword id="KW-0119">Carbohydrate metabolism</keyword>
<keyword id="KW-0136">Cellulose degradation</keyword>
<keyword id="KW-0326">Glycosidase</keyword>
<keyword id="KW-0378">Hydrolase</keyword>
<keyword id="KW-0624">Polysaccharide degradation</keyword>
<keyword id="KW-0964">Secreted</keyword>
<keyword id="KW-0732">Signal</keyword>
<proteinExistence type="inferred from homology"/>
<accession>Q59394</accession>
<reference key="1">
    <citation type="journal article" date="1996" name="Biotechnology (N.Y.)">
        <title>Transplanting two unique beta-glucanase catalytic activities into one multienzyme, which forms glucose.</title>
        <authorList>
            <person name="Olsen O."/>
            <person name="Thomsen K.K."/>
            <person name="Weber J."/>
            <person name="Duus J.O."/>
            <person name="Svendsen I."/>
            <person name="Wegener C."/>
            <person name="von Wettstein D."/>
        </authorList>
    </citation>
    <scope>NUCLEOTIDE SEQUENCE [GENOMIC DNA]</scope>
</reference>
<protein>
    <recommendedName>
        <fullName>Endoglucanase N</fullName>
        <ecNumber>3.2.1.4</ecNumber>
    </recommendedName>
    <alternativeName>
        <fullName>Cellulase N</fullName>
    </alternativeName>
    <alternativeName>
        <fullName>Endo-1,4-beta-glucanase N</fullName>
    </alternativeName>
</protein>
<gene>
    <name type="primary">celN</name>
</gene>
<feature type="signal peptide" evidence="2">
    <location>
        <begin position="1"/>
        <end position="31"/>
    </location>
</feature>
<feature type="chain" id="PRO_0000007857" description="Endoglucanase N">
    <location>
        <begin position="32"/>
        <end position="444"/>
    </location>
</feature>
<feature type="domain" description="CBM3" evidence="3">
    <location>
        <begin position="356"/>
        <end position="444"/>
    </location>
</feature>
<feature type="region of interest" description="Disordered" evidence="4">
    <location>
        <begin position="332"/>
        <end position="358"/>
    </location>
</feature>
<feature type="compositionally biased region" description="Low complexity" evidence="4">
    <location>
        <begin position="339"/>
        <end position="358"/>
    </location>
</feature>
<feature type="active site" description="Proton donor" evidence="1">
    <location>
        <position position="168"/>
    </location>
</feature>
<feature type="active site" description="Nucleophile" evidence="1">
    <location>
        <position position="256"/>
    </location>
</feature>
<feature type="binding site" evidence="1">
    <location>
        <position position="64"/>
    </location>
    <ligand>
        <name>substrate</name>
    </ligand>
</feature>
<feature type="binding site" evidence="1">
    <location>
        <begin position="68"/>
        <end position="69"/>
    </location>
    <ligand>
        <name>substrate</name>
    </ligand>
</feature>
<feature type="binding site" evidence="1">
    <location>
        <position position="95"/>
    </location>
    <ligand>
        <name>substrate</name>
    </ligand>
</feature>
<feature type="binding site" evidence="1">
    <location>
        <position position="130"/>
    </location>
    <ligand>
        <name>substrate</name>
    </ligand>
</feature>
<feature type="binding site" evidence="1">
    <location>
        <position position="230"/>
    </location>
    <ligand>
        <name>substrate</name>
    </ligand>
</feature>
<feature type="binding site" evidence="1">
    <location>
        <begin position="262"/>
        <end position="263"/>
    </location>
    <ligand>
        <name>substrate</name>
    </ligand>
</feature>
<feature type="binding site" evidence="1">
    <location>
        <position position="290"/>
    </location>
    <ligand>
        <name>substrate</name>
    </ligand>
</feature>
<feature type="binding site" evidence="1">
    <location>
        <begin position="295"/>
        <end position="297"/>
    </location>
    <ligand>
        <name>substrate</name>
    </ligand>
</feature>
<evidence type="ECO:0000250" key="1">
    <source>
        <dbReference type="UniProtKB" id="O85465"/>
    </source>
</evidence>
<evidence type="ECO:0000255" key="2"/>
<evidence type="ECO:0000255" key="3">
    <source>
        <dbReference type="PROSITE-ProRule" id="PRU00513"/>
    </source>
</evidence>
<evidence type="ECO:0000256" key="4">
    <source>
        <dbReference type="SAM" id="MobiDB-lite"/>
    </source>
</evidence>
<evidence type="ECO:0000305" key="5"/>
<dbReference type="EC" id="3.2.1.4"/>
<dbReference type="EMBL" id="L39788">
    <property type="protein sequence ID" value="AAC37033.1"/>
    <property type="molecule type" value="Genomic_DNA"/>
</dbReference>
<dbReference type="SMR" id="Q59394"/>
<dbReference type="CAZy" id="CBM3">
    <property type="family name" value="Carbohydrate-Binding Module Family 3"/>
</dbReference>
<dbReference type="CAZy" id="GH5">
    <property type="family name" value="Glycoside Hydrolase Family 5"/>
</dbReference>
<dbReference type="GO" id="GO:0005576">
    <property type="term" value="C:extracellular region"/>
    <property type="evidence" value="ECO:0007669"/>
    <property type="project" value="UniProtKB-SubCell"/>
</dbReference>
<dbReference type="GO" id="GO:0008810">
    <property type="term" value="F:cellulase activity"/>
    <property type="evidence" value="ECO:0007669"/>
    <property type="project" value="UniProtKB-EC"/>
</dbReference>
<dbReference type="GO" id="GO:0030248">
    <property type="term" value="F:cellulose binding"/>
    <property type="evidence" value="ECO:0007669"/>
    <property type="project" value="InterPro"/>
</dbReference>
<dbReference type="GO" id="GO:0030245">
    <property type="term" value="P:cellulose catabolic process"/>
    <property type="evidence" value="ECO:0007669"/>
    <property type="project" value="UniProtKB-KW"/>
</dbReference>
<dbReference type="Gene3D" id="2.60.40.710">
    <property type="entry name" value="Endoglucanase-like"/>
    <property type="match status" value="1"/>
</dbReference>
<dbReference type="Gene3D" id="3.20.20.80">
    <property type="entry name" value="Glycosidases"/>
    <property type="match status" value="1"/>
</dbReference>
<dbReference type="InterPro" id="IPR008965">
    <property type="entry name" value="CBM2/CBM3_carb-bd_dom_sf"/>
</dbReference>
<dbReference type="InterPro" id="IPR001956">
    <property type="entry name" value="CBM3"/>
</dbReference>
<dbReference type="InterPro" id="IPR036966">
    <property type="entry name" value="CBM3_sf"/>
</dbReference>
<dbReference type="InterPro" id="IPR001547">
    <property type="entry name" value="Glyco_hydro_5"/>
</dbReference>
<dbReference type="InterPro" id="IPR018087">
    <property type="entry name" value="Glyco_hydro_5_CS"/>
</dbReference>
<dbReference type="InterPro" id="IPR017853">
    <property type="entry name" value="Glycoside_hydrolase_SF"/>
</dbReference>
<dbReference type="PANTHER" id="PTHR34142">
    <property type="entry name" value="ENDO-BETA-1,4-GLUCANASE A"/>
    <property type="match status" value="1"/>
</dbReference>
<dbReference type="PANTHER" id="PTHR34142:SF1">
    <property type="entry name" value="GLYCOSIDE HYDROLASE FAMILY 5 DOMAIN-CONTAINING PROTEIN"/>
    <property type="match status" value="1"/>
</dbReference>
<dbReference type="Pfam" id="PF00942">
    <property type="entry name" value="CBM_3"/>
    <property type="match status" value="1"/>
</dbReference>
<dbReference type="Pfam" id="PF00150">
    <property type="entry name" value="Cellulase"/>
    <property type="match status" value="1"/>
</dbReference>
<dbReference type="SMART" id="SM01067">
    <property type="entry name" value="CBM_3"/>
    <property type="match status" value="1"/>
</dbReference>
<dbReference type="SUPFAM" id="SSF51445">
    <property type="entry name" value="(Trans)glycosidases"/>
    <property type="match status" value="1"/>
</dbReference>
<dbReference type="SUPFAM" id="SSF49384">
    <property type="entry name" value="Carbohydrate-binding domain"/>
    <property type="match status" value="1"/>
</dbReference>
<dbReference type="PROSITE" id="PS51172">
    <property type="entry name" value="CBM3"/>
    <property type="match status" value="1"/>
</dbReference>
<dbReference type="PROSITE" id="PS00659">
    <property type="entry name" value="GLYCOSYL_HYDROL_F5"/>
    <property type="match status" value="1"/>
</dbReference>
<sequence>MWMRRNQIVRKLTLGVVTTVLGMSLSFSALSATPVETHGQLSIENGRLVDEQGKRVQLRGVSSHGLQWFGDYVNKDSMKWLRDDWGINVFRVAMYTAADGYISNPSLANKVKEAVAAAQSLGVYIIIDWHILSDNDPNIYKAQAKTFFAEMAGLYGSSPNVIYEIANEPNGGVTWNGQIRPYALEVTDTIRSKDPDNLIIVGTGTWSQDIHDAADNQLPDPNTLYALHFYAGTHGQFLRDRIDYAQSRGAAIFVSEWGTSDASGNGGPFLPESQTWIDFLNNRGVSWVNWSLTDKSEASAALAPGASKSGGWTEQNLSTSGKFVREQIRAGANLGGGDTPTTPTTPTEPTNPGNGTTGDVVLQYRNVDNNPSDDAIRMAVNIKNTGSTPIKLSDLQVRYYFHDDGKPGANLFVDWANVGPNNIVTSTGTPAASTDKANRYVLVT</sequence>